<proteinExistence type="inferred from homology"/>
<name>C550A_CYACA</name>
<sequence length="164" mass="18212">MNRISIYRIKVLAFLFAVSTYVYPASSLELNEEARTVKLNSEGQSLTLNEEQIKKGKRLFNSHCGSCHVGGITKTNPNVGLDLESLNGANPPRNNINALVEYMKDPKTYDGSESIAEIHPSIKSADIFPKMRDLSDDDLKVIAGHILVQPKINSEKWGGGKIYY</sequence>
<feature type="signal peptide" evidence="2">
    <location>
        <begin position="1"/>
        <end position="27"/>
    </location>
</feature>
<feature type="chain" id="PRO_0000006514" description="Photosystem II extrinsic protein V">
    <location>
        <begin position="28"/>
        <end position="164"/>
    </location>
</feature>
<feature type="binding site" description="covalent" evidence="2">
    <location>
        <position position="64"/>
    </location>
    <ligand>
        <name>heme c</name>
        <dbReference type="ChEBI" id="CHEBI:61717"/>
    </ligand>
</feature>
<feature type="binding site" description="covalent" evidence="2">
    <location>
        <position position="67"/>
    </location>
    <ligand>
        <name>heme c</name>
        <dbReference type="ChEBI" id="CHEBI:61717"/>
    </ligand>
</feature>
<feature type="binding site" description="axial binding residue" evidence="2">
    <location>
        <position position="68"/>
    </location>
    <ligand>
        <name>heme c</name>
        <dbReference type="ChEBI" id="CHEBI:61717"/>
    </ligand>
    <ligandPart>
        <name>Fe</name>
        <dbReference type="ChEBI" id="CHEBI:18248"/>
    </ligandPart>
</feature>
<feature type="binding site" description="axial binding residue" evidence="2">
    <location>
        <position position="119"/>
    </location>
    <ligand>
        <name>heme c</name>
        <dbReference type="ChEBI" id="CHEBI:61717"/>
    </ligand>
    <ligandPart>
        <name>Fe</name>
        <dbReference type="ChEBI" id="CHEBI:18248"/>
    </ligandPart>
</feature>
<dbReference type="EMBL" id="AF022186">
    <property type="protein sequence ID" value="AAF12938.1"/>
    <property type="molecule type" value="Genomic_DNA"/>
</dbReference>
<dbReference type="RefSeq" id="NP_045156.1">
    <property type="nucleotide sequence ID" value="NC_001840.1"/>
</dbReference>
<dbReference type="SMR" id="Q9TLW2"/>
<dbReference type="GeneID" id="800220"/>
<dbReference type="GO" id="GO:0009535">
    <property type="term" value="C:chloroplast thylakoid membrane"/>
    <property type="evidence" value="ECO:0007669"/>
    <property type="project" value="UniProtKB-SubCell"/>
</dbReference>
<dbReference type="GO" id="GO:0009523">
    <property type="term" value="C:photosystem II"/>
    <property type="evidence" value="ECO:0007669"/>
    <property type="project" value="UniProtKB-KW"/>
</dbReference>
<dbReference type="GO" id="GO:0009055">
    <property type="term" value="F:electron transfer activity"/>
    <property type="evidence" value="ECO:0007669"/>
    <property type="project" value="InterPro"/>
</dbReference>
<dbReference type="GO" id="GO:0020037">
    <property type="term" value="F:heme binding"/>
    <property type="evidence" value="ECO:0007669"/>
    <property type="project" value="InterPro"/>
</dbReference>
<dbReference type="GO" id="GO:0005506">
    <property type="term" value="F:iron ion binding"/>
    <property type="evidence" value="ECO:0007669"/>
    <property type="project" value="InterPro"/>
</dbReference>
<dbReference type="GO" id="GO:0019684">
    <property type="term" value="P:photosynthesis, light reaction"/>
    <property type="evidence" value="ECO:0007669"/>
    <property type="project" value="UniProtKB-UniRule"/>
</dbReference>
<dbReference type="GO" id="GO:0022904">
    <property type="term" value="P:respiratory electron transport chain"/>
    <property type="evidence" value="ECO:0007669"/>
    <property type="project" value="InterPro"/>
</dbReference>
<dbReference type="Gene3D" id="1.10.760.10">
    <property type="entry name" value="Cytochrome c-like domain"/>
    <property type="match status" value="1"/>
</dbReference>
<dbReference type="HAMAP" id="MF_01378">
    <property type="entry name" value="PSII_Cyt550"/>
    <property type="match status" value="1"/>
</dbReference>
<dbReference type="InterPro" id="IPR009056">
    <property type="entry name" value="Cyt_c-like_dom"/>
</dbReference>
<dbReference type="InterPro" id="IPR036909">
    <property type="entry name" value="Cyt_c-like_dom_sf"/>
</dbReference>
<dbReference type="InterPro" id="IPR029490">
    <property type="entry name" value="Cytochrom_C550"/>
</dbReference>
<dbReference type="InterPro" id="IPR017851">
    <property type="entry name" value="PsbV_cyt_c550"/>
</dbReference>
<dbReference type="InterPro" id="IPR016003">
    <property type="entry name" value="PsbV_cyt_c550-like"/>
</dbReference>
<dbReference type="NCBIfam" id="TIGR03045">
    <property type="entry name" value="PS_II_C550"/>
    <property type="match status" value="1"/>
</dbReference>
<dbReference type="Pfam" id="PF14495">
    <property type="entry name" value="Cytochrom_C550"/>
    <property type="match status" value="1"/>
</dbReference>
<dbReference type="PIRSF" id="PIRSF005890">
    <property type="entry name" value="Phot_II_cyt_c550"/>
    <property type="match status" value="1"/>
</dbReference>
<dbReference type="SUPFAM" id="SSF46626">
    <property type="entry name" value="Cytochrome c"/>
    <property type="match status" value="1"/>
</dbReference>
<dbReference type="PROSITE" id="PS51007">
    <property type="entry name" value="CYTC"/>
    <property type="match status" value="1"/>
</dbReference>
<comment type="function">
    <text evidence="2">One of the extrinsic, lumenal subunits of photosystem II (PSII). PSII is a light-driven water plastoquinone oxidoreductase, using light energy to abstract electrons from H(2)O, generating a proton gradient subsequently used for ATP formation. The extrinsic proteins stabilize the structure of photosystem II oxygen-evolving complex (OEC), the ion environment of oxygen evolution and protect the OEC against heat-induced inactivation.</text>
</comment>
<comment type="cofactor">
    <cofactor evidence="2">
        <name>heme c</name>
        <dbReference type="ChEBI" id="CHEBI:61717"/>
    </cofactor>
    <text evidence="2">Binds 1 heme c group covalently per subunit.</text>
</comment>
<comment type="subunit">
    <text evidence="1">PSII is composed of 1 copy each of membrane proteins PsbA, PsbB, PsbC, PsbD, PsbE, PsbF, PsbH, PsbI, PsbJ, PsbK, PsbL, PsbM, PsbT, PsbY, PsbZ, Psb30/Ycf12, at least 3 peripheral proteins of the oxygen-evolving complex and a large number of cofactors. It forms dimeric complexes. The extrinsic subunits in red algae are PsbO (OEC33), PsbQ', cytochrome c-550 and PsbU.</text>
</comment>
<comment type="subcellular location">
    <subcellularLocation>
        <location evidence="2">Plastid</location>
        <location evidence="2">Chloroplast thylakoid membrane</location>
        <topology evidence="2">Peripheral membrane protein</topology>
        <orientation evidence="2">Lumenal side</orientation>
    </subcellularLocation>
    <text evidence="2">Associated with photosystem II at the lumenal side of the thylakoid membrane.</text>
</comment>
<comment type="similarity">
    <text evidence="2">Belongs to the cytochrome c family. PsbV subfamily.</text>
</comment>
<comment type="caution">
    <text evidence="3">The RK-1 strain used in this study does not seem to be the same one studied in Japan (AC Q76FB0).</text>
</comment>
<accession>Q9TLW2</accession>
<protein>
    <recommendedName>
        <fullName evidence="2">Photosystem II extrinsic protein V</fullName>
        <shortName evidence="2">PsbV</shortName>
    </recommendedName>
    <alternativeName>
        <fullName evidence="2">Cytochrome c-550</fullName>
    </alternativeName>
    <alternativeName>
        <fullName evidence="2">Cytochrome c550</fullName>
    </alternativeName>
</protein>
<keyword id="KW-0150">Chloroplast</keyword>
<keyword id="KW-0249">Electron transport</keyword>
<keyword id="KW-0349">Heme</keyword>
<keyword id="KW-0408">Iron</keyword>
<keyword id="KW-0472">Membrane</keyword>
<keyword id="KW-0479">Metal-binding</keyword>
<keyword id="KW-0602">Photosynthesis</keyword>
<keyword id="KW-0604">Photosystem II</keyword>
<keyword id="KW-0934">Plastid</keyword>
<keyword id="KW-0732">Signal</keyword>
<keyword id="KW-0793">Thylakoid</keyword>
<keyword id="KW-0813">Transport</keyword>
<reference key="1">
    <citation type="journal article" date="2000" name="J. Mol. Evol.">
        <title>The structure and gene repertoire of an ancient red algal plastid genome.</title>
        <authorList>
            <person name="Gloeckner G."/>
            <person name="Rosenthal A."/>
            <person name="Valentin K.-U."/>
        </authorList>
    </citation>
    <scope>NUCLEOTIDE SEQUENCE [LARGE SCALE GENOMIC DNA]</scope>
    <source>
        <strain>RK-1</strain>
    </source>
</reference>
<gene>
    <name evidence="2" type="primary">psbV</name>
</gene>
<geneLocation type="chloroplast"/>
<organism>
    <name type="scientific">Cyanidium caldarium</name>
    <name type="common">Red alga</name>
    <dbReference type="NCBI Taxonomy" id="2771"/>
    <lineage>
        <taxon>Eukaryota</taxon>
        <taxon>Rhodophyta</taxon>
        <taxon>Bangiophyceae</taxon>
        <taxon>Cyanidiales</taxon>
        <taxon>Cyanidiaceae</taxon>
        <taxon>Cyanidium</taxon>
    </lineage>
</organism>
<evidence type="ECO:0000250" key="1">
    <source>
        <dbReference type="UniProtKB" id="Q76FB0"/>
    </source>
</evidence>
<evidence type="ECO:0000255" key="2">
    <source>
        <dbReference type="HAMAP-Rule" id="MF_01378"/>
    </source>
</evidence>
<evidence type="ECO:0000305" key="3"/>